<feature type="chain" id="PRO_0000361759" description="Protein PF3D7_1417600">
    <location>
        <begin position="1"/>
        <end position="4662"/>
    </location>
</feature>
<feature type="transmembrane region" description="Helical" evidence="1">
    <location>
        <begin position="136"/>
        <end position="156"/>
    </location>
</feature>
<feature type="transmembrane region" description="Helical" evidence="1">
    <location>
        <begin position="161"/>
        <end position="181"/>
    </location>
</feature>
<feature type="repeat" description="LRR 1" evidence="1">
    <location>
        <begin position="466"/>
        <end position="489"/>
    </location>
</feature>
<feature type="domain" description="HSA" evidence="2">
    <location>
        <begin position="783"/>
        <end position="856"/>
    </location>
</feature>
<feature type="repeat" description="LRR 2" evidence="1">
    <location>
        <begin position="1150"/>
        <end position="1172"/>
    </location>
</feature>
<feature type="repeat" description="LRR 3" evidence="1">
    <location>
        <begin position="2063"/>
        <end position="2086"/>
    </location>
</feature>
<feature type="repeat" description="LRR 4" evidence="1">
    <location>
        <begin position="2129"/>
        <end position="2153"/>
    </location>
</feature>
<feature type="repeat" description="LRR 5" evidence="1">
    <location>
        <begin position="2672"/>
        <end position="2695"/>
    </location>
</feature>
<feature type="repeat" description="LRR 6" evidence="1">
    <location>
        <begin position="2773"/>
        <end position="2796"/>
    </location>
</feature>
<feature type="repeat" description="LRR 7" evidence="1">
    <location>
        <begin position="2864"/>
        <end position="2888"/>
    </location>
</feature>
<feature type="repeat" description="LRR 8" evidence="1">
    <location>
        <begin position="2904"/>
        <end position="2929"/>
    </location>
</feature>
<feature type="repeat" description="LRR 9" evidence="1">
    <location>
        <begin position="3377"/>
        <end position="3400"/>
    </location>
</feature>
<feature type="repeat" description="LRR 10" evidence="1">
    <location>
        <begin position="3438"/>
        <end position="3461"/>
    </location>
</feature>
<feature type="repeat" description="LRR 11" evidence="1">
    <location>
        <begin position="3756"/>
        <end position="3781"/>
    </location>
</feature>
<feature type="repeat" description="LRR 12" evidence="1">
    <location>
        <begin position="3935"/>
        <end position="3960"/>
    </location>
</feature>
<feature type="repeat" description="LRR 13" evidence="1">
    <location>
        <begin position="3965"/>
        <end position="3985"/>
    </location>
</feature>
<feature type="repeat" description="LRR 14" evidence="1">
    <location>
        <begin position="3986"/>
        <end position="4010"/>
    </location>
</feature>
<feature type="repeat" description="LRR 15" evidence="1">
    <location>
        <begin position="4296"/>
        <end position="4321"/>
    </location>
</feature>
<feature type="repeat" description="LRR 16" evidence="1">
    <location>
        <begin position="4333"/>
        <end position="4357"/>
    </location>
</feature>
<feature type="region of interest" description="Disordered" evidence="3">
    <location>
        <begin position="583"/>
        <end position="710"/>
    </location>
</feature>
<feature type="region of interest" description="Disordered" evidence="3">
    <location>
        <begin position="942"/>
        <end position="967"/>
    </location>
</feature>
<feature type="region of interest" description="Disordered" evidence="3">
    <location>
        <begin position="1505"/>
        <end position="1540"/>
    </location>
</feature>
<feature type="region of interest" description="Disordered" evidence="3">
    <location>
        <begin position="1705"/>
        <end position="1761"/>
    </location>
</feature>
<feature type="region of interest" description="Disordered" evidence="3">
    <location>
        <begin position="2228"/>
        <end position="2261"/>
    </location>
</feature>
<feature type="region of interest" description="Disordered" evidence="3">
    <location>
        <begin position="2956"/>
        <end position="2975"/>
    </location>
</feature>
<feature type="region of interest" description="Disordered" evidence="3">
    <location>
        <begin position="4384"/>
        <end position="4412"/>
    </location>
</feature>
<feature type="coiled-coil region" evidence="1">
    <location>
        <begin position="4203"/>
        <end position="4272"/>
    </location>
</feature>
<feature type="compositionally biased region" description="Low complexity" evidence="3">
    <location>
        <begin position="590"/>
        <end position="644"/>
    </location>
</feature>
<feature type="compositionally biased region" description="Basic and acidic residues" evidence="3">
    <location>
        <begin position="650"/>
        <end position="666"/>
    </location>
</feature>
<feature type="compositionally biased region" description="Basic residues" evidence="3">
    <location>
        <begin position="690"/>
        <end position="701"/>
    </location>
</feature>
<feature type="compositionally biased region" description="Low complexity" evidence="3">
    <location>
        <begin position="1505"/>
        <end position="1524"/>
    </location>
</feature>
<feature type="compositionally biased region" description="Basic and acidic residues" evidence="3">
    <location>
        <begin position="1710"/>
        <end position="1761"/>
    </location>
</feature>
<feature type="compositionally biased region" description="Basic residues" evidence="3">
    <location>
        <begin position="2230"/>
        <end position="2241"/>
    </location>
</feature>
<feature type="compositionally biased region" description="Acidic residues" evidence="3">
    <location>
        <begin position="2246"/>
        <end position="2261"/>
    </location>
</feature>
<evidence type="ECO:0000255" key="1"/>
<evidence type="ECO:0000255" key="2">
    <source>
        <dbReference type="PROSITE-ProRule" id="PRU00549"/>
    </source>
</evidence>
<evidence type="ECO:0000256" key="3">
    <source>
        <dbReference type="SAM" id="MobiDB-lite"/>
    </source>
</evidence>
<evidence type="ECO:0000269" key="4">
    <source>
    </source>
</evidence>
<evidence type="ECO:0000305" key="5"/>
<dbReference type="EMBL" id="LN999946">
    <property type="protein sequence ID" value="CZT99887.1"/>
    <property type="molecule type" value="Genomic_DNA"/>
</dbReference>
<dbReference type="RefSeq" id="XP_001348348.1">
    <property type="nucleotide sequence ID" value="XM_001348312.1"/>
</dbReference>
<dbReference type="SMR" id="Q8ILR9"/>
<dbReference type="FunCoup" id="Q8ILR9">
    <property type="interactions" value="449"/>
</dbReference>
<dbReference type="STRING" id="36329.Q8ILR9"/>
<dbReference type="PaxDb" id="5833-PF14_0175"/>
<dbReference type="EnsemblProtists" id="CZT99887">
    <property type="protein sequence ID" value="CZT99887"/>
    <property type="gene ID" value="PF3D7_1417600"/>
</dbReference>
<dbReference type="GeneID" id="811756"/>
<dbReference type="KEGG" id="pfa:PF3D7_1417600"/>
<dbReference type="VEuPathDB" id="PlasmoDB:PF3D7_1417600"/>
<dbReference type="HOGENOM" id="CLU_223536_0_0_1"/>
<dbReference type="InParanoid" id="Q8ILR9"/>
<dbReference type="OMA" id="NNEGECN"/>
<dbReference type="OrthoDB" id="372624at2759"/>
<dbReference type="PhylomeDB" id="Q8ILR9"/>
<dbReference type="Proteomes" id="UP000001450">
    <property type="component" value="Chromosome 14"/>
</dbReference>
<dbReference type="GO" id="GO:0016020">
    <property type="term" value="C:membrane"/>
    <property type="evidence" value="ECO:0007669"/>
    <property type="project" value="UniProtKB-SubCell"/>
</dbReference>
<dbReference type="GO" id="GO:0005634">
    <property type="term" value="C:nucleus"/>
    <property type="evidence" value="ECO:0000318"/>
    <property type="project" value="GO_Central"/>
</dbReference>
<dbReference type="GO" id="GO:0000987">
    <property type="term" value="F:cis-regulatory region sequence-specific DNA binding"/>
    <property type="evidence" value="ECO:0000318"/>
    <property type="project" value="GO_Central"/>
</dbReference>
<dbReference type="GO" id="GO:0000981">
    <property type="term" value="F:DNA-binding transcription factor activity, RNA polymerase II-specific"/>
    <property type="evidence" value="ECO:0000318"/>
    <property type="project" value="GO_Central"/>
</dbReference>
<dbReference type="GO" id="GO:0042594">
    <property type="term" value="P:response to starvation"/>
    <property type="evidence" value="ECO:0000318"/>
    <property type="project" value="GO_Central"/>
</dbReference>
<dbReference type="InterPro" id="IPR014012">
    <property type="entry name" value="HSA_dom"/>
</dbReference>
<organism>
    <name type="scientific">Plasmodium falciparum (isolate 3D7)</name>
    <dbReference type="NCBI Taxonomy" id="36329"/>
    <lineage>
        <taxon>Eukaryota</taxon>
        <taxon>Sar</taxon>
        <taxon>Alveolata</taxon>
        <taxon>Apicomplexa</taxon>
        <taxon>Aconoidasida</taxon>
        <taxon>Haemosporida</taxon>
        <taxon>Plasmodiidae</taxon>
        <taxon>Plasmodium</taxon>
        <taxon>Plasmodium (Laverania)</taxon>
    </lineage>
</organism>
<keyword id="KW-0175">Coiled coil</keyword>
<keyword id="KW-0238">DNA-binding</keyword>
<keyword id="KW-0433">Leucine-rich repeat</keyword>
<keyword id="KW-0472">Membrane</keyword>
<keyword id="KW-0477">Merozoite</keyword>
<keyword id="KW-1185">Reference proteome</keyword>
<keyword id="KW-0677">Repeat</keyword>
<keyword id="KW-0812">Transmembrane</keyword>
<keyword id="KW-1133">Transmembrane helix</keyword>
<comment type="subcellular location">
    <subcellularLocation>
        <location evidence="1">Membrane</location>
        <topology evidence="1">Multi-pass membrane protein</topology>
    </subcellularLocation>
</comment>
<comment type="biotechnology">
    <text evidence="4">Possible candidate for an effective malaria vaccine as determined by epitope response in sera.</text>
</comment>
<sequence length="4662" mass="548869">MNSNKNFVNKLYRYYRKNDNYNKKRIFIYENTVYYTPDDCVFCTQLNCTIKKRWDKKKKKKLKSAEKEEYFKDYKYFETENNDNTDEYYKNDEEENEASDLMITYCDRHVSLINILVNMFKIYNKKKTYLNVTLNINYVFLQIIYNIILYFVYLYIYYTKYIYYILRTYLFLLLYNSFHIIRENCYYPNIFLYNYYRNRIKKNILQQWKMKKKKKKKKRKKKKHSLFLCKKNMRDTKSNHFVRNYSYKIIKDSYTNHVDDVIIKFLLYMFYEKFINKFNKYINIHHHYHNVYKKIYYYKIKEGMLPFLCDHIFKCNYNLFYIFNRYNFQFNAYNILLNCKEKNSEQIFIFFNKKFLIKKDYVMNYLIYVINNIREKINKIKIIYDDTKKCYFIFYKNKCTSCLITHNILNVPIEGIKKKSDNIYFEKPKTNIKNEDVNCKYNKIFYKYYISVINDMLCISKNNMIIKNIDSINKNHKRLIKISNYNITNVCMFLLLPEIFCKYYKKGDKKKKKNKNVKKIIFKERRVNIKSYKILLKCEILTHFNFFNVINCDRYIYQNNLYNNLVGLKKGSYMKTCTNDETYRNDGDVNNKNGYNNNEHSNSSNERSNNNGDNNNNNHNNNNHNNNHHNNGSNNHNGNNNSNNDDNDKDDDKKGNDKKNEDKDDENKSDDDNDDDKKNGDGLNRSLDTKKRKEKSKNKNKMKPDNTLNENVKELLFDKEGKSYTCTNNDLSLVNNTICESIKKRKSNRGEKRNYNNEKNDKNSLNNVIAENAYKIIKNGRLYKPTEPVNIFRSHNKFMLKEMMWMSIDYYEEKRWKKNVSKKFGYLMSNHFEEKKKNDKYFISSQISNDIKMFWFFMLNEIRPDLVPVDLDHKIKNKNHLKNDFLNSFRKNLQIEEYNLEMDDNNQYSFNQHDGINEESSVQNKSEKNSFSINTSIDDNWGLMNKMSHQNGKNNNHNDYNNKCEDNKNNDYNNNKCDDNNNNDYNNNKCDDNKNNDYNNKCEDNKNNDYNNNKCDDNNNDDYNNKCDDNNHNDYNNKCDVNKLNNISIEHTNCINSNKYNLLNISTHKEINMIDNNTNDISTVCCENNNNNNNNNNNNERNNHINVMKKKNIIDYENYDQIVMNIEENVNKELLKKHKIYKKDYYTVENVHINHIQYDDNNLYYNDDLYNYYQSKNDDGYLDLSNHLYIYCLLFISISLIEINEHINFSRPDNHLPNDVDNALLEDEQNNSNNNNYNNYNNDIFVNYMNAYNNGELFCNNTQRDNIKFPQYGTFKKIKNEFEDFRELKKKKKTDMLKNNKDGLLSNVDNINLDIIRKGNTEFKENKIVLNNENNVCYPNAKRNSIMDKDIYENEKDINNCENNILRGKQENIKNYEENKMIETYYDEMLLKKKSINQLRLISEEMLLSKRENDNGNDYKNKNFIDHYDEENYNGYDKLNKYVNKRILSIDNNNNNNNIENKLDSFVVHKNMNNSNIYNILSVPSLNNTDVKDLVVIPYSCDNNNNNNNSNNNNSNSNNNSNSNIKTKESVSTTNHNNSSNNIIYENIKNDYINEIKEKNVNVYLHNMELYGGIPYPFEYKYIDDFYDDINLPLMNLAEYDKYTFFLYLFYMKNSSYILKKQMKKDKRKRKKEFTDVLLTKKRTPKRKINKLENEKKIEQIEDAEKVLSSEKVVDGENILKVINDQNNLSNEVNIIKDVTISGTKINSKNNDKSDDKNDDKNDKKNDGKNDKNDEKDDNKTGEKGDNKIGEKDDNKINEKDDNKINDKEIVGTVLRTSTKNKTKNKLKNKDGYVIKKEHLGDLEERQQKKIKKKEMETIKKWKEKKDEWELEETNFLLILTKTYMNYINMDEIIKREYGISLNSCTALGDIKNKNNMNNMNNMNNMNNMNNMNNMNNMNNIDETDNGNNINIENNVYNSNNGNINNVVEIKNANNSKTKEHEEINNDNSNVENKNVTNDFIKKYKGHEYIMSFNKFENNINNKLKNYTDFINWNIISVALVSYNKISHIYEKKRGPNECKEKFLSLIKDDIYKITKLQNLYHDYYLNTIKNNNSMKRKKKKCITKVKFLPLFSSNNVNKLIGMFNKYMNEKLKKYELKKMDMNNNNKIETLKVKNIIIKNEKIEEKKHDEEINILNKNDDKINEYKDELNVKDEDIHLIKKVKKKSSIIKKKKKGFFHNLFSTFSGKKSRESSEEDTDCGRDSFFSCSDVEISATKLDDSCISFSNNKNKSNKKKRAKKNIKLGEEENESECNNEGECNNEGECNNEGECNNEGECNNEGECNNEGEGNNESEIASTKKELLDINNKINDENDNHNFNKKRSSISYYFDDYFDEHFEDYLDDYFEDEWDDYVDENFVDNSDEFFEEDVNEFKKINNIDENTTNNNSTDIIKKNEKNNIEHIKELNNTYVDENSHIEKKEPTICVNIKNSTNENNNILINNDTFKSKDEKKDTYNKEVCVNSISQLIIYNKCKDDEYKYDFNYILKNRDKIKKWLNCICKNKKNIKEFMNIINNDYFVKNKYFHRLIESVVNNVSKEQSSFTYSNNIIINSLNKEPDYELTYRENSNDRNINNPLDNEFIKMIRKIMEYDKKRKLKSIQKLKNISNNYSYNTINEFYISKPNESYNTVNEFVQKILNYVPYVDDKKKIIIKKIRKRFQCKNLITQILLADYILDKLKNFPINESIESSKNNNKTIDMLLSETRLKAYSKYINEHFNDNYDPVKIETSFLKMFSSENDELYKKNILNNNNNKEVTHINIKSEEVALNKSIQETTNTVLKDTIIESNEISCIVDKTVDIHNEQNDKKHDTSPADINNKDYIGYMHVNKKELVSMQNSSNPSDIIQQCVNKVEVYNKDVCQTNGYMNINDDNKMNNFVNNNITHINNNVNNNNNIVNHLNNNNNNNNANNINNLNVNHLNNNISQINNNYNNSNMSSIYIASDQNEHFNKMTVMEKQDPMNNTKQRSHSSYHTSFPMQNNNTPLYNKLEGDQIKLSKYNSLESNKNNIDIISTNNNATKTKDHVIKANNKGSTRGKRQTLSLVKPHKESEHVQDSSVINQPVKNVSSKGEEIILGNNRQKSQPIKNVDITNKMTKYKTSVSSSILSSDKLKNNNILNTVQNESAYLSSKFNSNVQTLNNNVNNNVNINVNNMNSNISNNMNSNINNNMNSNMCNNMNSNMSNNMNSNMHVMDQGSFFTSNMVNREVNNLLNEEQRINTNVVSSHYNSVVSSTQFINDRGNYTNRIQKILSNNKYSLTPMKNNITQENMNNCIVNHQTPNKNIQEYYIPNASPNKLNKSISNVDIMKSNTSSILYPQAHNSVSSNFNNVSETLQNVNVLHASKKYHMNNSNDICTNINNNNNNNNNNNNNNNNNVHHNSMNQNNMNTINMNNINMNNINMNNITMNNINMNNINMNNINMNNTNNNVNNINMNNINSNVNNINNSMNNINISNNINYNISNNYNNSVSMYNIPNKEDDKFISPLHSSMQNNKYMPINRNNSSMSYNKTPICDSVELPIKQMSGNISNNCNASMQLEVSSNSSSKKLQHTIGSNTINTDKKSLLMYIENRARTGSSSINKINDDMFSIKSSTPSNYPPSYTTHQQFISESENKSNLYHDQMLNQDVIMDNKNVQNFTYAPCSNSLNNNLKNTNTMNNETRSNIISNYKQVKYSNISVNNTPNNVIMQTQNMTVQNNAKMSLNGSTTHPIVNRTNMENIDLIKLANDPLNIHRNGIHMGNIKNDNIEEKKNVSSNIRSIADNSQRLQNIHLGNQQNDIQHMNLDNINNNNNNNNLKMKKKSKNNININNNPNNNLNNNGQIDNAYLNVSPTISNSLQQTNMYQSDMKNSIIYNSSIQEKDPNNRNYNTQGNNVQTMNQSNGNVYNVNVPNRKQSNLNQYVNPMNFLIQVLNKCNSNTNGQVKASASNANVNYANVNSTSLNQPNINNVGMNQPNINNVGMNQPNINNVGMNQPNINNVGMNQPNINNVSMNQPNINNVNMNQPNINNVSMNQPNINNFSMNQSNTNNFNMNKPSTSSFSMNQPSTNNFSMNKSSTNNFSINQTSANNFSMHQPSTNNFSMNKPSTNNFSTNKPSTNNFSMNQPNINNISMNQPNTNNVHMNNLNMNQSGMNHTNMTSPIFNQSNSSKQSVNENAFVPPAYHTSNIIQKNATSVYNDNFNNPNVVNVGLKNTMTKNIIQRVPQKKGYSTHDMNQQERLQQERLQQERLQQERLQQERLQQERLQQERLQQERLQQERLQQERLQQERLQQERLQQKWEQQKIQQELYQKSHNDKESETNNSSSYQELNNHTLQENTIAKDSMRQHIFLKTRQQENIPKELQKMHSHQLQTEKMKTQQLSAHSLQQQMYPQQMTSQVHSSFHAQKIKQQLQQQMNHQQINKHQMNQQQMNKQQMNQQQINQQQMNQQQINQQQINQQQINQQQINQQQINQQQINQQQINQQQINQQQINQQQINQQSMSKYPYQAQEIKKHMDQLQQNVSIVTQQKMQPIYSVKQNMPFNEENEMKRNTRKITLPMTHQIPNVPNIQQQINNKMDERMSTENINENNLYNMMNRKLSTSINKFNNHDQYYPYDSYQQQQLQGNNINVMDIRNVDKNENNIFLLKNNQSRDIQNNCTNIMMNNNIPSSYITPGQAYKLNSNQNINHTQQKK</sequence>
<name>YPF17_PLAF7</name>
<gene>
    <name type="ORF">PF14_0175</name>
    <name type="ORF">PF3D7_1417600</name>
</gene>
<protein>
    <recommendedName>
        <fullName>Protein PF3D7_1417600</fullName>
    </recommendedName>
</protein>
<proteinExistence type="evidence at protein level"/>
<accession>Q8ILR9</accession>
<accession>A0A144A1P7</accession>
<reference key="1">
    <citation type="journal article" date="2002" name="Nature">
        <title>Genome sequence of the human malaria parasite Plasmodium falciparum.</title>
        <authorList>
            <person name="Gardner M.J."/>
            <person name="Hall N."/>
            <person name="Fung E."/>
            <person name="White O."/>
            <person name="Berriman M."/>
            <person name="Hyman R.W."/>
            <person name="Carlton J.M."/>
            <person name="Pain A."/>
            <person name="Nelson K.E."/>
            <person name="Bowman S."/>
            <person name="Paulsen I.T."/>
            <person name="James K.D."/>
            <person name="Eisen J.A."/>
            <person name="Rutherford K.M."/>
            <person name="Salzberg S.L."/>
            <person name="Craig A."/>
            <person name="Kyes S."/>
            <person name="Chan M.-S."/>
            <person name="Nene V."/>
            <person name="Shallom S.J."/>
            <person name="Suh B."/>
            <person name="Peterson J."/>
            <person name="Angiuoli S."/>
            <person name="Pertea M."/>
            <person name="Allen J."/>
            <person name="Selengut J."/>
            <person name="Haft D."/>
            <person name="Mather M.W."/>
            <person name="Vaidya A.B."/>
            <person name="Martin D.M.A."/>
            <person name="Fairlamb A.H."/>
            <person name="Fraunholz M.J."/>
            <person name="Roos D.S."/>
            <person name="Ralph S.A."/>
            <person name="McFadden G.I."/>
            <person name="Cummings L.M."/>
            <person name="Subramanian G.M."/>
            <person name="Mungall C."/>
            <person name="Venter J.C."/>
            <person name="Carucci D.J."/>
            <person name="Hoffman S.L."/>
            <person name="Newbold C."/>
            <person name="Davis R.W."/>
            <person name="Fraser C.M."/>
            <person name="Barrell B.G."/>
        </authorList>
    </citation>
    <scope>NUCLEOTIDE SEQUENCE [LARGE SCALE GENOMIC DNA]</scope>
    <source>
        <strain>3D7</strain>
    </source>
</reference>
<reference evidence="5" key="2">
    <citation type="journal article" date="2007" name="PLoS ONE">
        <title>Rapid identification of malaria vaccine candidates based on alpha-helical coiled coil protein motif.</title>
        <authorList>
            <person name="Villard V."/>
            <person name="Agak G.W."/>
            <person name="Frank G."/>
            <person name="Jafarshad A."/>
            <person name="Servis C."/>
            <person name="Nebie I."/>
            <person name="Sirima S.B."/>
            <person name="Felger I."/>
            <person name="Arevalo-Herrera M."/>
            <person name="Herrera S."/>
            <person name="Heitz F."/>
            <person name="Baecker V."/>
            <person name="Druilhe P."/>
            <person name="Kajava A.V."/>
            <person name="Corradin G."/>
        </authorList>
    </citation>
    <scope>SYNTHESIS OF 3419-3445</scope>
    <scope>POSSIBLE CANDIDATE MALARIA EPITOPE</scope>
</reference>